<comment type="function">
    <text evidence="1">Might be involved in Fe(2+) ion uptake (By similarity).</text>
</comment>
<comment type="similarity">
    <text evidence="2">Belongs to the FeoA family.</text>
</comment>
<feature type="chain" id="PRO_0000066208" description="Putative Fe(2+) transport protein A">
    <location>
        <begin position="1"/>
        <end position="82"/>
    </location>
</feature>
<keyword id="KW-0406">Ion transport</keyword>
<keyword id="KW-0408">Iron</keyword>
<keyword id="KW-0410">Iron transport</keyword>
<keyword id="KW-0813">Transport</keyword>
<name>FEOA_LEPBY</name>
<evidence type="ECO:0000250" key="1">
    <source>
        <dbReference type="UniProtKB" id="P0AEL3"/>
    </source>
</evidence>
<evidence type="ECO:0000305" key="2"/>
<sequence>MTGFTIEGSSLKLLKPQEQGVVSRIDSSRGDFVAQKLRSMNITLGTRVTVEQRSPRFLLRVGADQVALSDPLQDAIYVRLSR</sequence>
<organism>
    <name type="scientific">Leptolyngbya boryana</name>
    <name type="common">Plectonema boryanum</name>
    <dbReference type="NCBI Taxonomy" id="1184"/>
    <lineage>
        <taxon>Bacteria</taxon>
        <taxon>Bacillati</taxon>
        <taxon>Cyanobacteriota</taxon>
        <taxon>Cyanophyceae</taxon>
        <taxon>Leptolyngbyales</taxon>
        <taxon>Leptolyngbyaceae</taxon>
        <taxon>Leptolyngbya group</taxon>
        <taxon>Leptolyngbya</taxon>
    </lineage>
</organism>
<dbReference type="EMBL" id="X71865">
    <property type="protein sequence ID" value="CAA50699.1"/>
    <property type="molecule type" value="Genomic_DNA"/>
</dbReference>
<dbReference type="PIR" id="E49890">
    <property type="entry name" value="E49890"/>
</dbReference>
<dbReference type="SMR" id="P46043"/>
<dbReference type="GO" id="GO:0046914">
    <property type="term" value="F:transition metal ion binding"/>
    <property type="evidence" value="ECO:0007669"/>
    <property type="project" value="InterPro"/>
</dbReference>
<dbReference type="GO" id="GO:0006826">
    <property type="term" value="P:iron ion transport"/>
    <property type="evidence" value="ECO:0007669"/>
    <property type="project" value="UniProtKB-KW"/>
</dbReference>
<dbReference type="Gene3D" id="2.30.30.90">
    <property type="match status" value="1"/>
</dbReference>
<dbReference type="InterPro" id="IPR007167">
    <property type="entry name" value="Fe-transptr_FeoA-like"/>
</dbReference>
<dbReference type="InterPro" id="IPR038157">
    <property type="entry name" value="FeoA_core_dom"/>
</dbReference>
<dbReference type="InterPro" id="IPR008988">
    <property type="entry name" value="Transcriptional_repressor_C"/>
</dbReference>
<dbReference type="Pfam" id="PF04023">
    <property type="entry name" value="FeoA"/>
    <property type="match status" value="1"/>
</dbReference>
<dbReference type="SMART" id="SM00899">
    <property type="entry name" value="FeoA"/>
    <property type="match status" value="1"/>
</dbReference>
<dbReference type="SUPFAM" id="SSF50037">
    <property type="entry name" value="C-terminal domain of transcriptional repressors"/>
    <property type="match status" value="1"/>
</dbReference>
<reference key="1">
    <citation type="journal article" date="1994" name="J. Bacteriol.">
        <title>Characterization of the genome region encoding an fdxH-type ferredoxin and a new 2[4Fe-4S] ferredoxin from the nonheterocystous, nitrogen-fixing cyanobacterium Plectonema boryanum PCC 73110.</title>
        <authorList>
            <person name="Schrautemeier B."/>
            <person name="Cassing A."/>
            <person name="Boehme H."/>
        </authorList>
    </citation>
    <scope>NUCLEOTIDE SEQUENCE [GENOMIC DNA]</scope>
    <source>
        <strain>ATCC 18200 / UTEX 594 / PCC 73110</strain>
    </source>
</reference>
<proteinExistence type="inferred from homology"/>
<accession>P46043</accession>
<protein>
    <recommendedName>
        <fullName>Putative Fe(2+) transport protein A</fullName>
    </recommendedName>
    <alternativeName>
        <fullName>ORF3</fullName>
    </alternativeName>
</protein>